<reference key="1">
    <citation type="journal article" date="1997" name="Nature">
        <title>The nucleotide sequence of Saccharomyces cerevisiae chromosome XVI.</title>
        <authorList>
            <person name="Bussey H."/>
            <person name="Storms R.K."/>
            <person name="Ahmed A."/>
            <person name="Albermann K."/>
            <person name="Allen E."/>
            <person name="Ansorge W."/>
            <person name="Araujo R."/>
            <person name="Aparicio A."/>
            <person name="Barrell B.G."/>
            <person name="Badcock K."/>
            <person name="Benes V."/>
            <person name="Botstein D."/>
            <person name="Bowman S."/>
            <person name="Brueckner M."/>
            <person name="Carpenter J."/>
            <person name="Cherry J.M."/>
            <person name="Chung E."/>
            <person name="Churcher C.M."/>
            <person name="Coster F."/>
            <person name="Davis K."/>
            <person name="Davis R.W."/>
            <person name="Dietrich F.S."/>
            <person name="Delius H."/>
            <person name="DiPaolo T."/>
            <person name="Dubois E."/>
            <person name="Duesterhoeft A."/>
            <person name="Duncan M."/>
            <person name="Floeth M."/>
            <person name="Fortin N."/>
            <person name="Friesen J.D."/>
            <person name="Fritz C."/>
            <person name="Goffeau A."/>
            <person name="Hall J."/>
            <person name="Hebling U."/>
            <person name="Heumann K."/>
            <person name="Hilbert H."/>
            <person name="Hillier L.W."/>
            <person name="Hunicke-Smith S."/>
            <person name="Hyman R.W."/>
            <person name="Johnston M."/>
            <person name="Kalman S."/>
            <person name="Kleine K."/>
            <person name="Komp C."/>
            <person name="Kurdi O."/>
            <person name="Lashkari D."/>
            <person name="Lew H."/>
            <person name="Lin A."/>
            <person name="Lin D."/>
            <person name="Louis E.J."/>
            <person name="Marathe R."/>
            <person name="Messenguy F."/>
            <person name="Mewes H.-W."/>
            <person name="Mirtipati S."/>
            <person name="Moestl D."/>
            <person name="Mueller-Auer S."/>
            <person name="Namath A."/>
            <person name="Nentwich U."/>
            <person name="Oefner P."/>
            <person name="Pearson D."/>
            <person name="Petel F.X."/>
            <person name="Pohl T.M."/>
            <person name="Purnelle B."/>
            <person name="Rajandream M.A."/>
            <person name="Rechmann S."/>
            <person name="Rieger M."/>
            <person name="Riles L."/>
            <person name="Roberts D."/>
            <person name="Schaefer M."/>
            <person name="Scharfe M."/>
            <person name="Scherens B."/>
            <person name="Schramm S."/>
            <person name="Schroeder M."/>
            <person name="Sdicu A.-M."/>
            <person name="Tettelin H."/>
            <person name="Urrestarazu L.A."/>
            <person name="Ushinsky S."/>
            <person name="Vierendeels F."/>
            <person name="Vissers S."/>
            <person name="Voss H."/>
            <person name="Walsh S.V."/>
            <person name="Wambutt R."/>
            <person name="Wang Y."/>
            <person name="Wedler E."/>
            <person name="Wedler H."/>
            <person name="Winnett E."/>
            <person name="Zhong W.-W."/>
            <person name="Zollner A."/>
            <person name="Vo D.H."/>
            <person name="Hani J."/>
        </authorList>
    </citation>
    <scope>NUCLEOTIDE SEQUENCE [LARGE SCALE GENOMIC DNA]</scope>
    <source>
        <strain>ATCC 204508 / S288c</strain>
    </source>
</reference>
<reference key="2">
    <citation type="journal article" date="2014" name="G3 (Bethesda)">
        <title>The reference genome sequence of Saccharomyces cerevisiae: Then and now.</title>
        <authorList>
            <person name="Engel S.R."/>
            <person name="Dietrich F.S."/>
            <person name="Fisk D.G."/>
            <person name="Binkley G."/>
            <person name="Balakrishnan R."/>
            <person name="Costanzo M.C."/>
            <person name="Dwight S.S."/>
            <person name="Hitz B.C."/>
            <person name="Karra K."/>
            <person name="Nash R.S."/>
            <person name="Weng S."/>
            <person name="Wong E.D."/>
            <person name="Lloyd P."/>
            <person name="Skrzypek M.S."/>
            <person name="Miyasato S.R."/>
            <person name="Simison M."/>
            <person name="Cherry J.M."/>
        </authorList>
    </citation>
    <scope>GENOME REANNOTATION</scope>
    <source>
        <strain>ATCC 204508 / S288c</strain>
    </source>
</reference>
<reference key="3">
    <citation type="journal article" date="2003" name="Nature">
        <title>Mitochondrial membrane remodelling regulated by a conserved rhomboid protease.</title>
        <authorList>
            <person name="McQuibban G.A."/>
            <person name="Saurya S."/>
            <person name="Freeman M."/>
        </authorList>
    </citation>
    <scope>GENE NAME</scope>
</reference>
<reference key="4">
    <citation type="journal article" date="2003" name="Nature">
        <title>Global analysis of protein localization in budding yeast.</title>
        <authorList>
            <person name="Huh W.-K."/>
            <person name="Falvo J.V."/>
            <person name="Gerke L.C."/>
            <person name="Carroll A.S."/>
            <person name="Howson R.W."/>
            <person name="Weissman J.S."/>
            <person name="O'Shea E.K."/>
        </authorList>
    </citation>
    <scope>SUBCELLULAR LOCATION [LARGE SCALE ANALYSIS]</scope>
</reference>
<reference key="5">
    <citation type="journal article" date="2003" name="Nature">
        <title>Global analysis of protein expression in yeast.</title>
        <authorList>
            <person name="Ghaemmaghami S."/>
            <person name="Huh W.-K."/>
            <person name="Bower K."/>
            <person name="Howson R.W."/>
            <person name="Belle A."/>
            <person name="Dephoure N."/>
            <person name="O'Shea E.K."/>
            <person name="Weissman J.S."/>
        </authorList>
    </citation>
    <scope>LEVEL OF PROTEIN EXPRESSION [LARGE SCALE ANALYSIS]</scope>
</reference>
<reference key="6">
    <citation type="journal article" date="2004" name="Mol. Cell. Proteomics">
        <title>The phox homology (PX) domain protein interaction network in yeast.</title>
        <authorList>
            <person name="Vollert C.S."/>
            <person name="Uetz P."/>
        </authorList>
    </citation>
    <scope>INTERACTION WITH SNX3</scope>
</reference>
<reference key="7">
    <citation type="journal article" date="2006" name="Proc. Natl. Acad. Sci. U.S.A.">
        <title>A global topology map of the Saccharomyces cerevisiae membrane proteome.</title>
        <authorList>
            <person name="Kim H."/>
            <person name="Melen K."/>
            <person name="Oesterberg M."/>
            <person name="von Heijne G."/>
        </authorList>
    </citation>
    <scope>TOPOLOGY [LARGE SCALE ANALYSIS]</scope>
    <source>
        <strain>ATCC 208353 / W303-1A</strain>
    </source>
</reference>
<comment type="function">
    <text evidence="1">Probable rhomboid-type serine protease that catalyzes intramembrane proteolysis.</text>
</comment>
<comment type="catalytic activity">
    <reaction evidence="1">
        <text>Cleaves type-1 transmembrane domains using a catalytic dyad composed of serine and histidine that are contributed by different transmembrane domains.</text>
        <dbReference type="EC" id="3.4.21.105"/>
    </reaction>
</comment>
<comment type="subunit">
    <text evidence="6">Interacts with SNX3.</text>
</comment>
<comment type="interaction">
    <interactant intactId="EBI-31471">
        <id>Q12270</id>
    </interactant>
    <interactant intactId="EBI-2421">
        <id>P39010</id>
        <label>AKR1</label>
    </interactant>
    <organismsDiffer>false</organismsDiffer>
    <experiments>3</experiments>
</comment>
<comment type="interaction">
    <interactant intactId="EBI-31471">
        <id>Q12270</id>
    </interactant>
    <interactant intactId="EBI-20232">
        <id>P32912</id>
        <label>VAM7</label>
    </interactant>
    <organismsDiffer>false</organismsDiffer>
    <experiments>3</experiments>
</comment>
<comment type="subcellular location">
    <subcellularLocation>
        <location evidence="4">Golgi apparatus membrane</location>
        <topology evidence="4">Multi-pass membrane protein</topology>
    </subcellularLocation>
    <subcellularLocation>
        <location evidence="4">Golgi apparatus</location>
        <location evidence="4">cis-Golgi network membrane</location>
        <topology evidence="4">Multi-pass membrane protein</topology>
    </subcellularLocation>
</comment>
<comment type="miscellaneous">
    <text evidence="5">Present with 7850 molecules/cell in log phase SD medium.</text>
</comment>
<comment type="similarity">
    <text evidence="7">Belongs to the peptidase S54 family.</text>
</comment>
<proteinExistence type="evidence at protein level"/>
<organism>
    <name type="scientific">Saccharomyces cerevisiae (strain ATCC 204508 / S288c)</name>
    <name type="common">Baker's yeast</name>
    <dbReference type="NCBI Taxonomy" id="559292"/>
    <lineage>
        <taxon>Eukaryota</taxon>
        <taxon>Fungi</taxon>
        <taxon>Dikarya</taxon>
        <taxon>Ascomycota</taxon>
        <taxon>Saccharomycotina</taxon>
        <taxon>Saccharomycetes</taxon>
        <taxon>Saccharomycetales</taxon>
        <taxon>Saccharomycetaceae</taxon>
        <taxon>Saccharomyces</taxon>
    </lineage>
</organism>
<accession>Q12270</accession>
<accession>D6W3C5</accession>
<name>RBD2_YEAST</name>
<dbReference type="EC" id="3.4.21.105" evidence="1"/>
<dbReference type="EMBL" id="Z73602">
    <property type="protein sequence ID" value="CAA97967.1"/>
    <property type="molecule type" value="Genomic_DNA"/>
</dbReference>
<dbReference type="EMBL" id="Z67751">
    <property type="protein sequence ID" value="CAA91598.1"/>
    <property type="molecule type" value="Genomic_DNA"/>
</dbReference>
<dbReference type="EMBL" id="BK006949">
    <property type="protein sequence ID" value="DAA11191.1"/>
    <property type="molecule type" value="Genomic_DNA"/>
</dbReference>
<dbReference type="PIR" id="S61018">
    <property type="entry name" value="S61018"/>
</dbReference>
<dbReference type="RefSeq" id="NP_015078.1">
    <property type="nucleotide sequence ID" value="NM_001184060.1"/>
</dbReference>
<dbReference type="SMR" id="Q12270"/>
<dbReference type="BioGRID" id="35917">
    <property type="interactions" value="148"/>
</dbReference>
<dbReference type="DIP" id="DIP-1734N"/>
<dbReference type="FunCoup" id="Q12270">
    <property type="interactions" value="109"/>
</dbReference>
<dbReference type="IntAct" id="Q12270">
    <property type="interactions" value="71"/>
</dbReference>
<dbReference type="MINT" id="Q12270"/>
<dbReference type="STRING" id="4932.YPL246C"/>
<dbReference type="PaxDb" id="4932-YPL246C"/>
<dbReference type="PeptideAtlas" id="Q12270"/>
<dbReference type="TopDownProteomics" id="Q12270"/>
<dbReference type="EnsemblFungi" id="YPL246C_mRNA">
    <property type="protein sequence ID" value="YPL246C"/>
    <property type="gene ID" value="YPL246C"/>
</dbReference>
<dbReference type="GeneID" id="855830"/>
<dbReference type="KEGG" id="sce:YPL246C"/>
<dbReference type="AGR" id="SGD:S000006167"/>
<dbReference type="SGD" id="S000006167">
    <property type="gene designation" value="RBD2"/>
</dbReference>
<dbReference type="VEuPathDB" id="FungiDB:YPL246C"/>
<dbReference type="eggNOG" id="KOG2632">
    <property type="taxonomic scope" value="Eukaryota"/>
</dbReference>
<dbReference type="HOGENOM" id="CLU_071084_0_0_1"/>
<dbReference type="InParanoid" id="Q12270"/>
<dbReference type="OMA" id="NTYPIVH"/>
<dbReference type="OrthoDB" id="10257275at2759"/>
<dbReference type="BioCyc" id="YEAST:G3O-34132-MONOMER"/>
<dbReference type="BioGRID-ORCS" id="855830">
    <property type="hits" value="1 hit in 10 CRISPR screens"/>
</dbReference>
<dbReference type="PRO" id="PR:Q12270"/>
<dbReference type="Proteomes" id="UP000002311">
    <property type="component" value="Chromosome XVI"/>
</dbReference>
<dbReference type="RNAct" id="Q12270">
    <property type="molecule type" value="protein"/>
</dbReference>
<dbReference type="GO" id="GO:0005794">
    <property type="term" value="C:Golgi apparatus"/>
    <property type="evidence" value="ECO:0007005"/>
    <property type="project" value="SGD"/>
</dbReference>
<dbReference type="GO" id="GO:0000139">
    <property type="term" value="C:Golgi membrane"/>
    <property type="evidence" value="ECO:0007669"/>
    <property type="project" value="UniProtKB-SubCell"/>
</dbReference>
<dbReference type="GO" id="GO:0034399">
    <property type="term" value="C:nuclear periphery"/>
    <property type="evidence" value="ECO:0000314"/>
    <property type="project" value="SGD"/>
</dbReference>
<dbReference type="GO" id="GO:0004252">
    <property type="term" value="F:serine-type endopeptidase activity"/>
    <property type="evidence" value="ECO:0000318"/>
    <property type="project" value="GO_Central"/>
</dbReference>
<dbReference type="GO" id="GO:0006508">
    <property type="term" value="P:proteolysis"/>
    <property type="evidence" value="ECO:0007669"/>
    <property type="project" value="UniProtKB-KW"/>
</dbReference>
<dbReference type="Gene3D" id="1.20.1540.10">
    <property type="entry name" value="Rhomboid-like"/>
    <property type="match status" value="1"/>
</dbReference>
<dbReference type="InterPro" id="IPR022764">
    <property type="entry name" value="Peptidase_S54_rhomboid_dom"/>
</dbReference>
<dbReference type="InterPro" id="IPR035952">
    <property type="entry name" value="Rhomboid-like_sf"/>
</dbReference>
<dbReference type="PANTHER" id="PTHR43066:SF1">
    <property type="entry name" value="RHOMBOID PROTEIN 2"/>
    <property type="match status" value="1"/>
</dbReference>
<dbReference type="PANTHER" id="PTHR43066">
    <property type="entry name" value="RHOMBOID-RELATED PROTEIN"/>
    <property type="match status" value="1"/>
</dbReference>
<dbReference type="Pfam" id="PF01694">
    <property type="entry name" value="Rhomboid"/>
    <property type="match status" value="1"/>
</dbReference>
<dbReference type="SUPFAM" id="SSF144091">
    <property type="entry name" value="Rhomboid-like"/>
    <property type="match status" value="1"/>
</dbReference>
<evidence type="ECO:0000250" key="1">
    <source>
        <dbReference type="UniProtKB" id="O74926"/>
    </source>
</evidence>
<evidence type="ECO:0000255" key="2"/>
<evidence type="ECO:0000256" key="3">
    <source>
        <dbReference type="SAM" id="MobiDB-lite"/>
    </source>
</evidence>
<evidence type="ECO:0000269" key="4">
    <source>
    </source>
</evidence>
<evidence type="ECO:0000269" key="5">
    <source>
    </source>
</evidence>
<evidence type="ECO:0000269" key="6">
    <source>
    </source>
</evidence>
<evidence type="ECO:0000305" key="7"/>
<sequence>MNWKSYVFPGGHPPAALTTGLVVFLTAIYLLSFIFALREDLSLAPESLFKLQMSRLSLYPLIHLSLPHLLFNVLAIWAPLNLFEETHGTVYTGVFLNLSALFAGILYCLLGKLLYPEALVAGASGWCFTLFAYYSFKESQIRPRTRIFRTDYSIPTLYTPLVLLVAIAVVIPGSSFWGHFFGLCVGYAIGYKESWFNKITPPGWIITKIEKSLDGLIRLIPWGIKYYRDEDIDRTKDYEPLMSTETPLPLHNDNSGTVLGTA</sequence>
<protein>
    <recommendedName>
        <fullName evidence="7">Rhomboid-type serine protease 2</fullName>
        <ecNumber evidence="1">3.4.21.105</ecNumber>
    </recommendedName>
    <alternativeName>
        <fullName evidence="7">Rhomboid protein 2</fullName>
    </alternativeName>
</protein>
<keyword id="KW-0333">Golgi apparatus</keyword>
<keyword id="KW-0378">Hydrolase</keyword>
<keyword id="KW-0472">Membrane</keyword>
<keyword id="KW-0645">Protease</keyword>
<keyword id="KW-1185">Reference proteome</keyword>
<keyword id="KW-0720">Serine protease</keyword>
<keyword id="KW-0812">Transmembrane</keyword>
<keyword id="KW-1133">Transmembrane helix</keyword>
<gene>
    <name type="primary">RBD2</name>
    <name type="ordered locus">YPL246C</name>
</gene>
<feature type="chain" id="PRO_0000206193" description="Rhomboid-type serine protease 2">
    <location>
        <begin position="1"/>
        <end position="262"/>
    </location>
</feature>
<feature type="topological domain" description="Cytoplasmic" evidence="2">
    <location>
        <begin position="1"/>
        <end position="16"/>
    </location>
</feature>
<feature type="transmembrane region" description="Helical" evidence="2">
    <location>
        <begin position="17"/>
        <end position="37"/>
    </location>
</feature>
<feature type="topological domain" description="Lumenal" evidence="2">
    <location>
        <begin position="38"/>
        <end position="57"/>
    </location>
</feature>
<feature type="transmembrane region" description="Helical" evidence="2">
    <location>
        <begin position="58"/>
        <end position="78"/>
    </location>
</feature>
<feature type="topological domain" description="Cytoplasmic" evidence="2">
    <location>
        <begin position="79"/>
        <end position="89"/>
    </location>
</feature>
<feature type="transmembrane region" description="Helical" evidence="2">
    <location>
        <begin position="90"/>
        <end position="110"/>
    </location>
</feature>
<feature type="topological domain" description="Lumenal" evidence="2">
    <location>
        <begin position="111"/>
        <end position="112"/>
    </location>
</feature>
<feature type="transmembrane region" description="Helical" evidence="2">
    <location>
        <begin position="113"/>
        <end position="133"/>
    </location>
</feature>
<feature type="topological domain" description="Cytoplasmic" evidence="2">
    <location>
        <begin position="134"/>
        <end position="151"/>
    </location>
</feature>
<feature type="transmembrane region" description="Helical" evidence="2">
    <location>
        <begin position="152"/>
        <end position="168"/>
    </location>
</feature>
<feature type="topological domain" description="Lumenal" evidence="2">
    <location>
        <begin position="169"/>
        <end position="174"/>
    </location>
</feature>
<feature type="transmembrane region" description="Helical" evidence="2">
    <location>
        <begin position="175"/>
        <end position="191"/>
    </location>
</feature>
<feature type="topological domain" description="Cytoplasmic" evidence="2">
    <location>
        <begin position="192"/>
        <end position="262"/>
    </location>
</feature>
<feature type="region of interest" description="Disordered" evidence="3">
    <location>
        <begin position="243"/>
        <end position="262"/>
    </location>
</feature>
<feature type="compositionally biased region" description="Polar residues" evidence="3">
    <location>
        <begin position="252"/>
        <end position="262"/>
    </location>
</feature>
<feature type="active site" description="Nucleophile" evidence="1">
    <location>
        <position position="124"/>
    </location>
</feature>
<feature type="active site" evidence="1">
    <location>
        <position position="179"/>
    </location>
</feature>